<feature type="chain" id="PRO_0000417090" description="CRISPR-associated endonuclease Cas1 1">
    <location>
        <begin position="1"/>
        <end position="315"/>
    </location>
</feature>
<feature type="binding site" evidence="1">
    <location>
        <position position="144"/>
    </location>
    <ligand>
        <name>Mn(2+)</name>
        <dbReference type="ChEBI" id="CHEBI:29035"/>
    </ligand>
</feature>
<feature type="binding site" evidence="1">
    <location>
        <position position="208"/>
    </location>
    <ligand>
        <name>Mn(2+)</name>
        <dbReference type="ChEBI" id="CHEBI:29035"/>
    </ligand>
</feature>
<feature type="binding site" evidence="1">
    <location>
        <position position="223"/>
    </location>
    <ligand>
        <name>Mn(2+)</name>
        <dbReference type="ChEBI" id="CHEBI:29035"/>
    </ligand>
</feature>
<organism>
    <name type="scientific">Thermus thermophilus (strain ATCC 27634 / DSM 579 / HB8)</name>
    <dbReference type="NCBI Taxonomy" id="300852"/>
    <lineage>
        <taxon>Bacteria</taxon>
        <taxon>Thermotogati</taxon>
        <taxon>Deinococcota</taxon>
        <taxon>Deinococci</taxon>
        <taxon>Thermales</taxon>
        <taxon>Thermaceae</taxon>
        <taxon>Thermus</taxon>
    </lineage>
</organism>
<sequence>MTLHLTRQGATLRLRQGRLLLEEEGREVAGFPARQVRSVALWGNVRLSTPALVFLLRQGVPVFFYSLEGFLHGVAGAYPDPHPAHLRAQFAAEGLPLARAFVVGKLRSALALLERHRLPEAGGVVEALARAEGASELERLRGAEGEGSRVYFQGLARLLGPYGFGGRTRRPPRDPVNAALSYGYALLLGRVLVAVRLAGLHPEVGFLHAEGRRSPALALDLMEEFRVPVVDQVVLSAFRRGLLTPSHAEVREGGVYLNEEGRRRLIQLFEERLLEGVSHPLGFRKPLGETIEVQAQRLKAALLGRGRYTPFYLWR</sequence>
<accession>Q53W21</accession>
<reference key="1">
    <citation type="submission" date="2004-11" db="EMBL/GenBank/DDBJ databases">
        <title>Complete genome sequence of Thermus thermophilus HB8.</title>
        <authorList>
            <person name="Masui R."/>
            <person name="Kurokawa K."/>
            <person name="Nakagawa N."/>
            <person name="Tokunaga F."/>
            <person name="Koyama Y."/>
            <person name="Shibata T."/>
            <person name="Oshima T."/>
            <person name="Yokoyama S."/>
            <person name="Yasunaga T."/>
            <person name="Kuramitsu S."/>
        </authorList>
    </citation>
    <scope>NUCLEOTIDE SEQUENCE [LARGE SCALE GENOMIC DNA]</scope>
    <source>
        <strain>ATCC 27634 / DSM 579 / HB8</strain>
    </source>
</reference>
<dbReference type="EC" id="3.1.-.-" evidence="1"/>
<dbReference type="EMBL" id="AP008227">
    <property type="protein sequence ID" value="BAD71941.1"/>
    <property type="molecule type" value="Genomic_DNA"/>
</dbReference>
<dbReference type="RefSeq" id="YP_145384.1">
    <property type="nucleotide sequence ID" value="NC_006462.1"/>
</dbReference>
<dbReference type="SMR" id="Q53W21"/>
<dbReference type="EnsemblBacteria" id="BAD71941">
    <property type="protein sequence ID" value="BAD71941"/>
    <property type="gene ID" value="BAD71941"/>
</dbReference>
<dbReference type="GeneID" id="3169526"/>
<dbReference type="KEGG" id="ttj:TTHB145"/>
<dbReference type="PATRIC" id="fig|300852.9.peg.2091"/>
<dbReference type="HOGENOM" id="CLU_052779_1_0_0"/>
<dbReference type="PhylomeDB" id="Q53W21"/>
<dbReference type="Proteomes" id="UP000000532">
    <property type="component" value="Plasmid pTT27"/>
</dbReference>
<dbReference type="GO" id="GO:0003677">
    <property type="term" value="F:DNA binding"/>
    <property type="evidence" value="ECO:0007669"/>
    <property type="project" value="UniProtKB-KW"/>
</dbReference>
<dbReference type="GO" id="GO:0004519">
    <property type="term" value="F:endonuclease activity"/>
    <property type="evidence" value="ECO:0007669"/>
    <property type="project" value="UniProtKB-UniRule"/>
</dbReference>
<dbReference type="GO" id="GO:0046872">
    <property type="term" value="F:metal ion binding"/>
    <property type="evidence" value="ECO:0007669"/>
    <property type="project" value="UniProtKB-UniRule"/>
</dbReference>
<dbReference type="GO" id="GO:0051607">
    <property type="term" value="P:defense response to virus"/>
    <property type="evidence" value="ECO:0007669"/>
    <property type="project" value="UniProtKB-UniRule"/>
</dbReference>
<dbReference type="GO" id="GO:0043571">
    <property type="term" value="P:maintenance of CRISPR repeat elements"/>
    <property type="evidence" value="ECO:0007669"/>
    <property type="project" value="UniProtKB-UniRule"/>
</dbReference>
<dbReference type="CDD" id="cd09634">
    <property type="entry name" value="Cas1_I-II-III"/>
    <property type="match status" value="1"/>
</dbReference>
<dbReference type="Gene3D" id="1.20.120.920">
    <property type="entry name" value="CRISPR-associated endonuclease Cas1, C-terminal domain"/>
    <property type="match status" value="1"/>
</dbReference>
<dbReference type="Gene3D" id="3.100.10.20">
    <property type="entry name" value="CRISPR-associated endonuclease Cas1, N-terminal domain"/>
    <property type="match status" value="1"/>
</dbReference>
<dbReference type="HAMAP" id="MF_01470">
    <property type="entry name" value="Cas1"/>
    <property type="match status" value="1"/>
</dbReference>
<dbReference type="InterPro" id="IPR050646">
    <property type="entry name" value="Cas1"/>
</dbReference>
<dbReference type="InterPro" id="IPR002729">
    <property type="entry name" value="CRISPR-assoc_Cas1"/>
</dbReference>
<dbReference type="InterPro" id="IPR042206">
    <property type="entry name" value="CRISPR-assoc_Cas1_C"/>
</dbReference>
<dbReference type="InterPro" id="IPR042211">
    <property type="entry name" value="CRISPR-assoc_Cas1_N"/>
</dbReference>
<dbReference type="NCBIfam" id="TIGR00287">
    <property type="entry name" value="cas1"/>
    <property type="match status" value="1"/>
</dbReference>
<dbReference type="PANTHER" id="PTHR34353">
    <property type="entry name" value="CRISPR-ASSOCIATED ENDONUCLEASE CAS1 1"/>
    <property type="match status" value="1"/>
</dbReference>
<dbReference type="PANTHER" id="PTHR34353:SF2">
    <property type="entry name" value="CRISPR-ASSOCIATED ENDONUCLEASE CAS1 1"/>
    <property type="match status" value="1"/>
</dbReference>
<dbReference type="Pfam" id="PF01867">
    <property type="entry name" value="Cas_Cas1"/>
    <property type="match status" value="1"/>
</dbReference>
<evidence type="ECO:0000255" key="1">
    <source>
        <dbReference type="HAMAP-Rule" id="MF_01470"/>
    </source>
</evidence>
<evidence type="ECO:0000305" key="2"/>
<gene>
    <name evidence="1" type="primary">cas1-1</name>
    <name type="ordered locus">TTHB145</name>
</gene>
<protein>
    <recommendedName>
        <fullName evidence="1">CRISPR-associated endonuclease Cas1 1</fullName>
        <ecNumber evidence="1">3.1.-.-</ecNumber>
    </recommendedName>
</protein>
<comment type="function">
    <text evidence="1">CRISPR (clustered regularly interspaced short palindromic repeat), is an adaptive immune system that provides protection against mobile genetic elements (viruses, transposable elements and conjugative plasmids). CRISPR clusters contain spacers, sequences complementary to antecedent mobile elements, and target invading nucleic acids. CRISPR clusters are transcribed and processed into CRISPR RNA (crRNA). Acts as a dsDNA endonuclease. Involved in the integration of spacer DNA into the CRISPR cassette.</text>
</comment>
<comment type="cofactor">
    <cofactor evidence="1">
        <name>Mg(2+)</name>
        <dbReference type="ChEBI" id="CHEBI:18420"/>
    </cofactor>
    <cofactor evidence="1">
        <name>Mn(2+)</name>
        <dbReference type="ChEBI" id="CHEBI:29035"/>
    </cofactor>
</comment>
<comment type="subunit">
    <text evidence="1">Homodimer, forms a heterotetramer with a Cas2 homodimer.</text>
</comment>
<comment type="miscellaneous">
    <text evidence="2">Probably encoded in a type III-A CRISPR locus.</text>
</comment>
<comment type="similarity">
    <text evidence="1">Belongs to the CRISPR-associated endonuclease Cas1 family.</text>
</comment>
<keyword id="KW-0051">Antiviral defense</keyword>
<keyword id="KW-0238">DNA-binding</keyword>
<keyword id="KW-0255">Endonuclease</keyword>
<keyword id="KW-0378">Hydrolase</keyword>
<keyword id="KW-0460">Magnesium</keyword>
<keyword id="KW-0464">Manganese</keyword>
<keyword id="KW-0479">Metal-binding</keyword>
<keyword id="KW-0540">Nuclease</keyword>
<keyword id="KW-0614">Plasmid</keyword>
<keyword id="KW-1185">Reference proteome</keyword>
<name>CAS1A_THET8</name>
<proteinExistence type="inferred from homology"/>
<geneLocation type="plasmid">
    <name>pTT27</name>
</geneLocation>